<sequence>MARDKTRMKRKERKNIAAGVAHVNSSFNNTKILISDVQGNAISWSSAGTMGFKGSRKSTPYAAQMAAEDAAKKAQDHGMKTIEVEVQGPGSGRESALRALAAAGLNITSIRDVTPMAHNGCRPPKRRRV</sequence>
<proteinExistence type="inferred from homology"/>
<feature type="chain" id="PRO_0000230425" description="Small ribosomal subunit protein uS11">
    <location>
        <begin position="1"/>
        <end position="129"/>
    </location>
</feature>
<organism>
    <name type="scientific">Cereibacter sphaeroides (strain ATCC 17023 / DSM 158 / JCM 6121 / CCUG 31486 / LMG 2827 / NBRC 12203 / NCIMB 8253 / ATH 2.4.1.)</name>
    <name type="common">Rhodobacter sphaeroides</name>
    <dbReference type="NCBI Taxonomy" id="272943"/>
    <lineage>
        <taxon>Bacteria</taxon>
        <taxon>Pseudomonadati</taxon>
        <taxon>Pseudomonadota</taxon>
        <taxon>Alphaproteobacteria</taxon>
        <taxon>Rhodobacterales</taxon>
        <taxon>Paracoccaceae</taxon>
        <taxon>Cereibacter</taxon>
    </lineage>
</organism>
<keyword id="KW-1185">Reference proteome</keyword>
<keyword id="KW-0687">Ribonucleoprotein</keyword>
<keyword id="KW-0689">Ribosomal protein</keyword>
<keyword id="KW-0694">RNA-binding</keyword>
<keyword id="KW-0699">rRNA-binding</keyword>
<dbReference type="EMBL" id="CP000143">
    <property type="protein sequence ID" value="ABA77885.1"/>
    <property type="molecule type" value="Genomic_DNA"/>
</dbReference>
<dbReference type="RefSeq" id="WP_002722534.1">
    <property type="nucleotide sequence ID" value="NZ_CP030271.1"/>
</dbReference>
<dbReference type="RefSeq" id="YP_351786.1">
    <property type="nucleotide sequence ID" value="NC_007493.2"/>
</dbReference>
<dbReference type="SMR" id="Q3J5P9"/>
<dbReference type="STRING" id="272943.RSP_1738"/>
<dbReference type="EnsemblBacteria" id="ABA77885">
    <property type="protein sequence ID" value="ABA77885"/>
    <property type="gene ID" value="RSP_1738"/>
</dbReference>
<dbReference type="GeneID" id="67445523"/>
<dbReference type="KEGG" id="rsp:RSP_1738"/>
<dbReference type="PATRIC" id="fig|272943.9.peg.616"/>
<dbReference type="eggNOG" id="COG0100">
    <property type="taxonomic scope" value="Bacteria"/>
</dbReference>
<dbReference type="OrthoDB" id="9806415at2"/>
<dbReference type="PhylomeDB" id="Q3J5P9"/>
<dbReference type="Proteomes" id="UP000002703">
    <property type="component" value="Chromosome 1"/>
</dbReference>
<dbReference type="GO" id="GO:1990904">
    <property type="term" value="C:ribonucleoprotein complex"/>
    <property type="evidence" value="ECO:0007669"/>
    <property type="project" value="UniProtKB-KW"/>
</dbReference>
<dbReference type="GO" id="GO:0005840">
    <property type="term" value="C:ribosome"/>
    <property type="evidence" value="ECO:0007669"/>
    <property type="project" value="UniProtKB-KW"/>
</dbReference>
<dbReference type="GO" id="GO:0019843">
    <property type="term" value="F:rRNA binding"/>
    <property type="evidence" value="ECO:0007669"/>
    <property type="project" value="UniProtKB-UniRule"/>
</dbReference>
<dbReference type="GO" id="GO:0003735">
    <property type="term" value="F:structural constituent of ribosome"/>
    <property type="evidence" value="ECO:0007669"/>
    <property type="project" value="InterPro"/>
</dbReference>
<dbReference type="GO" id="GO:0006412">
    <property type="term" value="P:translation"/>
    <property type="evidence" value="ECO:0007669"/>
    <property type="project" value="UniProtKB-UniRule"/>
</dbReference>
<dbReference type="FunFam" id="3.30.420.80:FF:000001">
    <property type="entry name" value="30S ribosomal protein S11"/>
    <property type="match status" value="1"/>
</dbReference>
<dbReference type="Gene3D" id="3.30.420.80">
    <property type="entry name" value="Ribosomal protein S11"/>
    <property type="match status" value="1"/>
</dbReference>
<dbReference type="HAMAP" id="MF_01310">
    <property type="entry name" value="Ribosomal_uS11"/>
    <property type="match status" value="1"/>
</dbReference>
<dbReference type="InterPro" id="IPR001971">
    <property type="entry name" value="Ribosomal_uS11"/>
</dbReference>
<dbReference type="InterPro" id="IPR019981">
    <property type="entry name" value="Ribosomal_uS11_bac-type"/>
</dbReference>
<dbReference type="InterPro" id="IPR018102">
    <property type="entry name" value="Ribosomal_uS11_CS"/>
</dbReference>
<dbReference type="InterPro" id="IPR036967">
    <property type="entry name" value="Ribosomal_uS11_sf"/>
</dbReference>
<dbReference type="NCBIfam" id="NF003698">
    <property type="entry name" value="PRK05309.1"/>
    <property type="match status" value="1"/>
</dbReference>
<dbReference type="NCBIfam" id="TIGR03632">
    <property type="entry name" value="uS11_bact"/>
    <property type="match status" value="1"/>
</dbReference>
<dbReference type="PANTHER" id="PTHR11759">
    <property type="entry name" value="40S RIBOSOMAL PROTEIN S14/30S RIBOSOMAL PROTEIN S11"/>
    <property type="match status" value="1"/>
</dbReference>
<dbReference type="Pfam" id="PF00411">
    <property type="entry name" value="Ribosomal_S11"/>
    <property type="match status" value="1"/>
</dbReference>
<dbReference type="PIRSF" id="PIRSF002131">
    <property type="entry name" value="Ribosomal_S11"/>
    <property type="match status" value="1"/>
</dbReference>
<dbReference type="SUPFAM" id="SSF53137">
    <property type="entry name" value="Translational machinery components"/>
    <property type="match status" value="1"/>
</dbReference>
<dbReference type="PROSITE" id="PS00054">
    <property type="entry name" value="RIBOSOMAL_S11"/>
    <property type="match status" value="1"/>
</dbReference>
<protein>
    <recommendedName>
        <fullName evidence="1">Small ribosomal subunit protein uS11</fullName>
    </recommendedName>
    <alternativeName>
        <fullName evidence="2">30S ribosomal protein S11</fullName>
    </alternativeName>
</protein>
<name>RS11_CERS4</name>
<comment type="function">
    <text evidence="1">Located on the platform of the 30S subunit, it bridges several disparate RNA helices of the 16S rRNA. Forms part of the Shine-Dalgarno cleft in the 70S ribosome.</text>
</comment>
<comment type="subunit">
    <text evidence="1">Part of the 30S ribosomal subunit. Interacts with proteins S7 and S18. Binds to IF-3.</text>
</comment>
<comment type="similarity">
    <text evidence="1">Belongs to the universal ribosomal protein uS11 family.</text>
</comment>
<reference key="1">
    <citation type="submission" date="2005-09" db="EMBL/GenBank/DDBJ databases">
        <title>Complete sequence of chromosome 1 of Rhodobacter sphaeroides 2.4.1.</title>
        <authorList>
            <person name="Copeland A."/>
            <person name="Lucas S."/>
            <person name="Lapidus A."/>
            <person name="Barry K."/>
            <person name="Detter J.C."/>
            <person name="Glavina T."/>
            <person name="Hammon N."/>
            <person name="Israni S."/>
            <person name="Pitluck S."/>
            <person name="Richardson P."/>
            <person name="Mackenzie C."/>
            <person name="Choudhary M."/>
            <person name="Larimer F."/>
            <person name="Hauser L.J."/>
            <person name="Land M."/>
            <person name="Donohue T.J."/>
            <person name="Kaplan S."/>
        </authorList>
    </citation>
    <scope>NUCLEOTIDE SEQUENCE [LARGE SCALE GENOMIC DNA]</scope>
    <source>
        <strain>ATCC 17023 / DSM 158 / JCM 6121 / CCUG 31486 / LMG 2827 / NBRC 12203 / NCIMB 8253 / ATH 2.4.1.</strain>
    </source>
</reference>
<evidence type="ECO:0000255" key="1">
    <source>
        <dbReference type="HAMAP-Rule" id="MF_01310"/>
    </source>
</evidence>
<evidence type="ECO:0000305" key="2"/>
<gene>
    <name evidence="1" type="primary">rpsK</name>
    <name type="ordered locus">RHOS4_03170</name>
    <name type="ORF">RSP_1738</name>
</gene>
<accession>Q3J5P9</accession>